<reference key="1">
    <citation type="journal article" date="2011" name="J. Bacteriol.">
        <title>Genome sequence of lineage III Listeria monocytogenes strain HCC23.</title>
        <authorList>
            <person name="Steele C.L."/>
            <person name="Donaldson J.R."/>
            <person name="Paul D."/>
            <person name="Banes M.M."/>
            <person name="Arick T."/>
            <person name="Bridges S.M."/>
            <person name="Lawrence M.L."/>
        </authorList>
    </citation>
    <scope>NUCLEOTIDE SEQUENCE [LARGE SCALE GENOMIC DNA]</scope>
    <source>
        <strain>HCC23</strain>
    </source>
</reference>
<comment type="function">
    <text evidence="2">One of the essential components for the initiation of protein synthesis. Protects formylmethionyl-tRNA from spontaneous hydrolysis and promotes its binding to the 30S ribosomal subunits. Also involved in the hydrolysis of GTP during the formation of the 70S ribosomal complex.</text>
</comment>
<comment type="subcellular location">
    <subcellularLocation>
        <location evidence="2">Cytoplasm</location>
    </subcellularLocation>
</comment>
<comment type="similarity">
    <text evidence="2">Belongs to the TRAFAC class translation factor GTPase superfamily. Classic translation factor GTPase family. IF-2 subfamily.</text>
</comment>
<proteinExistence type="inferred from homology"/>
<organism>
    <name type="scientific">Listeria monocytogenes serotype 4a (strain HCC23)</name>
    <dbReference type="NCBI Taxonomy" id="552536"/>
    <lineage>
        <taxon>Bacteria</taxon>
        <taxon>Bacillati</taxon>
        <taxon>Bacillota</taxon>
        <taxon>Bacilli</taxon>
        <taxon>Bacillales</taxon>
        <taxon>Listeriaceae</taxon>
        <taxon>Listeria</taxon>
    </lineage>
</organism>
<gene>
    <name evidence="2" type="primary">infB</name>
    <name type="ordered locus">LMHCC_1245</name>
</gene>
<name>IF2_LISMH</name>
<keyword id="KW-0963">Cytoplasm</keyword>
<keyword id="KW-0342">GTP-binding</keyword>
<keyword id="KW-0396">Initiation factor</keyword>
<keyword id="KW-0547">Nucleotide-binding</keyword>
<keyword id="KW-0648">Protein biosynthesis</keyword>
<accession>B8DG02</accession>
<protein>
    <recommendedName>
        <fullName evidence="2">Translation initiation factor IF-2</fullName>
    </recommendedName>
</protein>
<dbReference type="EMBL" id="CP001175">
    <property type="protein sequence ID" value="ACK39592.1"/>
    <property type="molecule type" value="Genomic_DNA"/>
</dbReference>
<dbReference type="RefSeq" id="WP_012581383.1">
    <property type="nucleotide sequence ID" value="NC_011660.1"/>
</dbReference>
<dbReference type="SMR" id="B8DG02"/>
<dbReference type="KEGG" id="lmh:LMHCC_1245"/>
<dbReference type="HOGENOM" id="CLU_006301_5_1_9"/>
<dbReference type="GO" id="GO:0005829">
    <property type="term" value="C:cytosol"/>
    <property type="evidence" value="ECO:0007669"/>
    <property type="project" value="TreeGrafter"/>
</dbReference>
<dbReference type="GO" id="GO:0005525">
    <property type="term" value="F:GTP binding"/>
    <property type="evidence" value="ECO:0007669"/>
    <property type="project" value="UniProtKB-KW"/>
</dbReference>
<dbReference type="GO" id="GO:0003924">
    <property type="term" value="F:GTPase activity"/>
    <property type="evidence" value="ECO:0007669"/>
    <property type="project" value="UniProtKB-UniRule"/>
</dbReference>
<dbReference type="GO" id="GO:0003743">
    <property type="term" value="F:translation initiation factor activity"/>
    <property type="evidence" value="ECO:0007669"/>
    <property type="project" value="UniProtKB-UniRule"/>
</dbReference>
<dbReference type="CDD" id="cd01887">
    <property type="entry name" value="IF2_eIF5B"/>
    <property type="match status" value="1"/>
</dbReference>
<dbReference type="CDD" id="cd03702">
    <property type="entry name" value="IF2_mtIF2_II"/>
    <property type="match status" value="1"/>
</dbReference>
<dbReference type="CDD" id="cd03692">
    <property type="entry name" value="mtIF2_IVc"/>
    <property type="match status" value="1"/>
</dbReference>
<dbReference type="FunFam" id="2.40.30.10:FF:000007">
    <property type="entry name" value="Translation initiation factor IF-2"/>
    <property type="match status" value="1"/>
</dbReference>
<dbReference type="FunFam" id="2.40.30.10:FF:000008">
    <property type="entry name" value="Translation initiation factor IF-2"/>
    <property type="match status" value="1"/>
</dbReference>
<dbReference type="FunFam" id="3.40.50.10050:FF:000001">
    <property type="entry name" value="Translation initiation factor IF-2"/>
    <property type="match status" value="1"/>
</dbReference>
<dbReference type="FunFam" id="3.40.50.300:FF:000019">
    <property type="entry name" value="Translation initiation factor IF-2"/>
    <property type="match status" value="1"/>
</dbReference>
<dbReference type="Gene3D" id="1.10.10.2480">
    <property type="match status" value="1"/>
</dbReference>
<dbReference type="Gene3D" id="3.40.50.300">
    <property type="entry name" value="P-loop containing nucleotide triphosphate hydrolases"/>
    <property type="match status" value="1"/>
</dbReference>
<dbReference type="Gene3D" id="2.40.30.10">
    <property type="entry name" value="Translation factors"/>
    <property type="match status" value="2"/>
</dbReference>
<dbReference type="Gene3D" id="3.40.50.10050">
    <property type="entry name" value="Translation initiation factor IF- 2, domain 3"/>
    <property type="match status" value="1"/>
</dbReference>
<dbReference type="HAMAP" id="MF_00100_B">
    <property type="entry name" value="IF_2_B"/>
    <property type="match status" value="1"/>
</dbReference>
<dbReference type="InterPro" id="IPR053905">
    <property type="entry name" value="EF-G-like_DII"/>
</dbReference>
<dbReference type="InterPro" id="IPR044145">
    <property type="entry name" value="IF2_II"/>
</dbReference>
<dbReference type="InterPro" id="IPR006847">
    <property type="entry name" value="IF2_N"/>
</dbReference>
<dbReference type="InterPro" id="IPR027417">
    <property type="entry name" value="P-loop_NTPase"/>
</dbReference>
<dbReference type="InterPro" id="IPR005225">
    <property type="entry name" value="Small_GTP-bd"/>
</dbReference>
<dbReference type="InterPro" id="IPR000795">
    <property type="entry name" value="T_Tr_GTP-bd_dom"/>
</dbReference>
<dbReference type="InterPro" id="IPR000178">
    <property type="entry name" value="TF_IF2_bacterial-like"/>
</dbReference>
<dbReference type="InterPro" id="IPR015760">
    <property type="entry name" value="TIF_IF2"/>
</dbReference>
<dbReference type="InterPro" id="IPR023115">
    <property type="entry name" value="TIF_IF2_dom3"/>
</dbReference>
<dbReference type="InterPro" id="IPR036925">
    <property type="entry name" value="TIF_IF2_dom3_sf"/>
</dbReference>
<dbReference type="InterPro" id="IPR009000">
    <property type="entry name" value="Transl_B-barrel_sf"/>
</dbReference>
<dbReference type="NCBIfam" id="TIGR00487">
    <property type="entry name" value="IF-2"/>
    <property type="match status" value="1"/>
</dbReference>
<dbReference type="NCBIfam" id="TIGR00231">
    <property type="entry name" value="small_GTP"/>
    <property type="match status" value="1"/>
</dbReference>
<dbReference type="PANTHER" id="PTHR43381:SF5">
    <property type="entry name" value="TR-TYPE G DOMAIN-CONTAINING PROTEIN"/>
    <property type="match status" value="1"/>
</dbReference>
<dbReference type="PANTHER" id="PTHR43381">
    <property type="entry name" value="TRANSLATION INITIATION FACTOR IF-2-RELATED"/>
    <property type="match status" value="1"/>
</dbReference>
<dbReference type="Pfam" id="PF22042">
    <property type="entry name" value="EF-G_D2"/>
    <property type="match status" value="1"/>
</dbReference>
<dbReference type="Pfam" id="PF00009">
    <property type="entry name" value="GTP_EFTU"/>
    <property type="match status" value="1"/>
</dbReference>
<dbReference type="Pfam" id="PF11987">
    <property type="entry name" value="IF-2"/>
    <property type="match status" value="1"/>
</dbReference>
<dbReference type="Pfam" id="PF04760">
    <property type="entry name" value="IF2_N"/>
    <property type="match status" value="2"/>
</dbReference>
<dbReference type="SUPFAM" id="SSF52156">
    <property type="entry name" value="Initiation factor IF2/eIF5b, domain 3"/>
    <property type="match status" value="1"/>
</dbReference>
<dbReference type="SUPFAM" id="SSF52540">
    <property type="entry name" value="P-loop containing nucleoside triphosphate hydrolases"/>
    <property type="match status" value="1"/>
</dbReference>
<dbReference type="SUPFAM" id="SSF50447">
    <property type="entry name" value="Translation proteins"/>
    <property type="match status" value="2"/>
</dbReference>
<dbReference type="PROSITE" id="PS51722">
    <property type="entry name" value="G_TR_2"/>
    <property type="match status" value="1"/>
</dbReference>
<dbReference type="PROSITE" id="PS01176">
    <property type="entry name" value="IF2"/>
    <property type="match status" value="1"/>
</dbReference>
<feature type="chain" id="PRO_1000118765" description="Translation initiation factor IF-2">
    <location>
        <begin position="1"/>
        <end position="781"/>
    </location>
</feature>
<feature type="domain" description="tr-type G">
    <location>
        <begin position="282"/>
        <end position="451"/>
    </location>
</feature>
<feature type="region of interest" description="Disordered" evidence="3">
    <location>
        <begin position="44"/>
        <end position="195"/>
    </location>
</feature>
<feature type="region of interest" description="G1" evidence="1">
    <location>
        <begin position="291"/>
        <end position="298"/>
    </location>
</feature>
<feature type="region of interest" description="G2" evidence="1">
    <location>
        <begin position="316"/>
        <end position="320"/>
    </location>
</feature>
<feature type="region of interest" description="G3" evidence="1">
    <location>
        <begin position="337"/>
        <end position="340"/>
    </location>
</feature>
<feature type="region of interest" description="G4" evidence="1">
    <location>
        <begin position="391"/>
        <end position="394"/>
    </location>
</feature>
<feature type="region of interest" description="G5" evidence="1">
    <location>
        <begin position="427"/>
        <end position="429"/>
    </location>
</feature>
<feature type="compositionally biased region" description="Basic and acidic residues" evidence="3">
    <location>
        <begin position="53"/>
        <end position="65"/>
    </location>
</feature>
<feature type="compositionally biased region" description="Polar residues" evidence="3">
    <location>
        <begin position="66"/>
        <end position="81"/>
    </location>
</feature>
<feature type="compositionally biased region" description="Low complexity" evidence="3">
    <location>
        <begin position="82"/>
        <end position="93"/>
    </location>
</feature>
<feature type="compositionally biased region" description="Polar residues" evidence="3">
    <location>
        <begin position="115"/>
        <end position="126"/>
    </location>
</feature>
<feature type="compositionally biased region" description="Low complexity" evidence="3">
    <location>
        <begin position="127"/>
        <end position="169"/>
    </location>
</feature>
<feature type="binding site" evidence="2">
    <location>
        <begin position="291"/>
        <end position="298"/>
    </location>
    <ligand>
        <name>GTP</name>
        <dbReference type="ChEBI" id="CHEBI:37565"/>
    </ligand>
</feature>
<feature type="binding site" evidence="2">
    <location>
        <begin position="337"/>
        <end position="341"/>
    </location>
    <ligand>
        <name>GTP</name>
        <dbReference type="ChEBI" id="CHEBI:37565"/>
    </ligand>
</feature>
<feature type="binding site" evidence="2">
    <location>
        <begin position="391"/>
        <end position="394"/>
    </location>
    <ligand>
        <name>GTP</name>
        <dbReference type="ChEBI" id="CHEBI:37565"/>
    </ligand>
</feature>
<evidence type="ECO:0000250" key="1"/>
<evidence type="ECO:0000255" key="2">
    <source>
        <dbReference type="HAMAP-Rule" id="MF_00100"/>
    </source>
</evidence>
<evidence type="ECO:0000256" key="3">
    <source>
        <dbReference type="SAM" id="MobiDB-lite"/>
    </source>
</evidence>
<sequence>MSKVRVYEYAKEHQVSSKKVIEALKDLGIEVANHMSTINENALRQLDNAVDGTNKKAEAPKKETTSNENGNSKGPNKPNMTNSNEKSNKPNKPAGQANKPATANKSQGAKPATNKPANTGNQTQASGNQQAGGQKRNNNNNSNRPGGGNPNRPGGNNRPNRGGNFNNKGRNTKKKGKLNHSTVPPTPPKPKELPEKIVFSESLTVAELAKKLYREPSELIKKLFMLGVVATINQSLDKDAIELICDDYGVQVEEEIKVDVTDLDVYFENELNEAVDESKLVERPPVVTIMGHVDHGKTTLLDSLRNTKVTLGEAGGITQHIGAYQLEIHNKKITFLDTPGHAAFTAMRARGAQITDITILVVAADDGVMPQTIEAINHAKAAGMPIIVAVNKIDKPQANPDRVMQELTEYELVPEAWGGDTIFAPISAKFGEGLENLLDMILLVSEVEELKANPDRRAIGSVIEAELDKGRGPVATLLVQDGTLNIGDPIVVGNTFGRVRAMVNDLGRRVKKVGPSTPVEITGLNDVPQAGDRFVVFEDEKTARNIGETRASRALVAQRSATNRVSLDNLFEHMKAGEMKEVNVIIKADVQGSVEALAASLRKIDVEGVNVKIIHTAVGAINESDITLAAASNAIIIGFNVRPTTQAREAAENESVDIRLHRVIYKAIDEIEAAMKGMLDPEFQEKIIGQAQVRQTINVSKVGTIAGCYVTDGKITRDSGVRIIRDGIVVFEGEIATLKRFKDDAKEVAKGYECGITVQNFNDIKEDDVIEAYVMEEIERK</sequence>